<sequence>MLSSFCGDGHPFSTGLPNVSICAQHTVLVWVPAAFFLLTLPFLSAQCHLTAQRFARLPFSAHFIIKLLLVAFLAANSLATWCYVLFSKNSYAAAYYVYPGLWVLVWTGTFLVHLIRLRCGLVSSGIQHVTSLIFLLCGAPEFYQWIRMENSNSFPNDLTTTDSAQFLSIAYLSWYSALILYTFSLCFADPRGAKTDDEKASSKSAASPELQSSFLNRLTLWWFNSIPWTGARRDLEIDDIFELNERSGTEFLSELWESFWEPKRLKYIHDTSIWAKKDPSEQEKDPVVIPSVVSSLFMMFRWEFLLASTLKFVSDTMQFASPFLLHELLNFISAKNAPFWKGMALSILMFSVSELRSLILNGYFYIMFRMGTKIQTSLTAAVYKKTLLISNSARRDRTVGEIVNLMAIDVERFQMITPQIQQFWSCPYQITFALVYLFITLGYSALPGVVIMVIFVPMNIISSMIVRKWQIEQMKLKDERTKMVNEVLNGIKVVKLYAWEVPMEAYIDEIRTKELALIKKSAMVRNILDSFNTASPFLVALFSFGTFVLSNPSHLLTPQIAFVSLALFNQLRSPMTMIALLINQAVQAVVSNKRLKEFLVAEELDEKCVDRSVNIERSHNAVRVENLTASWDPEEAAGEKTLQDVDLTAPRNSLIAVVGKVGSGKSSLLQALLGEMGKLRGRIGVNGRVAYVPQQPWIQNMTLRDNITFGRPFDRKRYDQVLYACALKADIKILPAGDQTEIGEKGINLSGGQKARVSLARAVYQNLDVYLLDDPLSAVDAHVGRHIFEKVIGPNGLLREKTRILVTHGLTYTKMADEILVMLEGKIEESGTFEHLIKRRGLFFDFMEEYKSGSDNSSEAGGSQDDDFEAIGGEIQDYMNPEDVVLTVTNDLDETIRTPELTTQISTMSSPEKPPTGTSPAAATESQNKLIKKEGIAQGKVEIATYQLYVKAAGYLLSIAFIGFFIVYMTLQILRSFWLSAWSDEYDPDSPSAHPMAKGWRLGVYGALGFSETACFFVALLALVFVGQRASKNLHGPLIHNLMRSPMSFYDTTPLGRILNRCAKDIETIDMMLPMNFRYLVMCVLQVAFTLIVIIISTPLFAVVILPLALIYLIFLRYYVPTSRQLKRLESVHRSPIYSHFGETIQGAASIRAFGKVDEFRQDSGRILDTFIRCRYSSLVSNRWLAVRLEFVGNCIIFFAALFAVLSKEFGWITSPGVIGVSVSYALNITEVLNFAVRQVSEIEANIVSVERVNEYTNTPNEAPWRIEGREPAPGWPSRGVVKFDGYSTRYREGLDLVLHDISADVAAGEKIGIVGRTGAGKSSFALALFRMIEAAGGRIVIDDVEVSQIGLHDLRSNITIIPQDPVLFSGTLRFNLDPFFTYSDDQIWRALELAHLKHFAAGLPDGLLYKISEAGENLSVGQRQLVALARALLRHTRVLVLDEATAAVDVATDALIQETIREEFKECTVFTIAHRLNTIMDYDRIMVLDKGSILEFDTPDALMADKNSAFAKMVADAAEQDKHE</sequence>
<protein>
    <recommendedName>
        <fullName evidence="7">Multidrug resistance protein mrp-7</fullName>
    </recommendedName>
</protein>
<name>MRP7_CAEEL</name>
<feature type="chain" id="PRO_0000453174" description="Multidrug resistance protein mrp-7">
    <location>
        <begin position="1"/>
        <end position="1525"/>
    </location>
</feature>
<feature type="topological domain" description="Extracellular" evidence="8">
    <location>
        <begin position="1"/>
        <end position="24"/>
    </location>
</feature>
<feature type="transmembrane region" description="Helical; Name=1" evidence="1">
    <location>
        <begin position="25"/>
        <end position="45"/>
    </location>
</feature>
<feature type="topological domain" description="Cytoplasmic" evidence="8">
    <location>
        <begin position="46"/>
        <end position="66"/>
    </location>
</feature>
<feature type="transmembrane region" description="Helical; Name=2" evidence="1">
    <location>
        <begin position="67"/>
        <end position="87"/>
    </location>
</feature>
<feature type="topological domain" description="Extracellular" evidence="8">
    <location>
        <begin position="88"/>
        <end position="94"/>
    </location>
</feature>
<feature type="transmembrane region" description="Helical; Name=3" evidence="1">
    <location>
        <begin position="95"/>
        <end position="115"/>
    </location>
</feature>
<feature type="topological domain" description="Cytoplasmic" evidence="8">
    <location>
        <begin position="116"/>
        <end position="118"/>
    </location>
</feature>
<feature type="transmembrane region" description="Helical; Name=4" evidence="1">
    <location>
        <begin position="119"/>
        <end position="139"/>
    </location>
</feature>
<feature type="topological domain" description="Extracellular" evidence="8">
    <location>
        <begin position="140"/>
        <end position="165"/>
    </location>
</feature>
<feature type="transmembrane region" description="Helical; Name=5" evidence="1">
    <location>
        <begin position="166"/>
        <end position="186"/>
    </location>
</feature>
<feature type="topological domain" description="Cytoplasmic" evidence="8">
    <location>
        <begin position="187"/>
        <end position="346"/>
    </location>
</feature>
<feature type="transmembrane region" description="Helical; Name=6" evidence="1 3">
    <location>
        <begin position="347"/>
        <end position="367"/>
    </location>
</feature>
<feature type="topological domain" description="Extracellular" evidence="8">
    <location>
        <begin position="368"/>
        <end position="434"/>
    </location>
</feature>
<feature type="transmembrane region" description="Helical; Name=7" evidence="1 3">
    <location>
        <begin position="435"/>
        <end position="455"/>
    </location>
</feature>
<feature type="topological domain" description="Cytoplasmic" evidence="8">
    <location>
        <begin position="456"/>
        <end position="535"/>
    </location>
</feature>
<feature type="transmembrane region" description="Helical; Name=8" evidence="1 3">
    <location>
        <begin position="536"/>
        <end position="556"/>
    </location>
</feature>
<feature type="topological domain" description="Extracellular" evidence="8">
    <location>
        <begin position="557"/>
        <end position="561"/>
    </location>
</feature>
<feature type="transmembrane region" description="Helical; Name=9" evidence="1 3">
    <location>
        <begin position="562"/>
        <end position="582"/>
    </location>
</feature>
<feature type="topological domain" description="Cytoplasmic" evidence="8">
    <location>
        <begin position="583"/>
        <end position="953"/>
    </location>
</feature>
<feature type="transmembrane region" description="Helical; Name=10" evidence="1 3">
    <location>
        <begin position="954"/>
        <end position="974"/>
    </location>
</feature>
<feature type="topological domain" description="Extracellular" evidence="8">
    <location>
        <begin position="975"/>
        <end position="1005"/>
    </location>
</feature>
<feature type="transmembrane region" description="Helical; Name=11" evidence="1 3">
    <location>
        <begin position="1006"/>
        <end position="1026"/>
    </location>
</feature>
<feature type="topological domain" description="Cytoplasmic" evidence="8">
    <location>
        <begin position="1027"/>
        <end position="1068"/>
    </location>
</feature>
<feature type="transmembrane region" description="Helical; Name=12" evidence="1 3">
    <location>
        <begin position="1069"/>
        <end position="1089"/>
    </location>
</feature>
<feature type="topological domain" description="Extracellular" evidence="8">
    <location>
        <position position="1090"/>
    </location>
</feature>
<feature type="transmembrane region" description="Helical; Name=13" evidence="1 3">
    <location>
        <begin position="1091"/>
        <end position="1111"/>
    </location>
</feature>
<feature type="topological domain" description="Cytoplasmic" evidence="8">
    <location>
        <begin position="1112"/>
        <end position="1184"/>
    </location>
</feature>
<feature type="transmembrane region" description="Helical; Name=14" evidence="1 3">
    <location>
        <begin position="1185"/>
        <end position="1205"/>
    </location>
</feature>
<feature type="topological domain" description="Extracellular" evidence="8">
    <location>
        <begin position="1206"/>
        <end position="1525"/>
    </location>
</feature>
<feature type="domain" description="ABC transmembrane type-1 1" evidence="3">
    <location>
        <begin position="305"/>
        <end position="587"/>
    </location>
</feature>
<feature type="domain" description="ABC transporter 1" evidence="2">
    <location>
        <begin position="622"/>
        <end position="849"/>
    </location>
</feature>
<feature type="domain" description="ABC transmembrane type-1 2" evidence="3">
    <location>
        <begin position="959"/>
        <end position="1245"/>
    </location>
</feature>
<feature type="domain" description="ABC transporter 2" evidence="2">
    <location>
        <begin position="1282"/>
        <end position="1516"/>
    </location>
</feature>
<feature type="region of interest" description="Disordered" evidence="5">
    <location>
        <begin position="900"/>
        <end position="925"/>
    </location>
</feature>
<feature type="binding site" evidence="2">
    <location>
        <begin position="659"/>
        <end position="666"/>
    </location>
    <ligand>
        <name>ATP</name>
        <dbReference type="ChEBI" id="CHEBI:30616"/>
    </ligand>
</feature>
<feature type="binding site" evidence="2">
    <location>
        <begin position="1316"/>
        <end position="1323"/>
    </location>
    <ligand>
        <name>ATP</name>
        <dbReference type="ChEBI" id="CHEBI:30616"/>
    </ligand>
</feature>
<feature type="glycosylation site" description="N-linked (GlcNAc...) asparagine" evidence="4">
    <location>
        <position position="18"/>
    </location>
</feature>
<feature type="glycosylation site" description="N-linked (GlcNAc...) asparagine" evidence="4">
    <location>
        <position position="1228"/>
    </location>
</feature>
<feature type="glycosylation site" description="N-linked (GlcNAc...) asparagine" evidence="4">
    <location>
        <position position="1358"/>
    </location>
</feature>
<feature type="glycosylation site" description="N-linked (GlcNAc...) asparagine" evidence="4">
    <location>
        <position position="1418"/>
    </location>
</feature>
<organism evidence="9">
    <name type="scientific">Caenorhabditis elegans</name>
    <dbReference type="NCBI Taxonomy" id="6239"/>
    <lineage>
        <taxon>Eukaryota</taxon>
        <taxon>Metazoa</taxon>
        <taxon>Ecdysozoa</taxon>
        <taxon>Nematoda</taxon>
        <taxon>Chromadorea</taxon>
        <taxon>Rhabditida</taxon>
        <taxon>Rhabditina</taxon>
        <taxon>Rhabditomorpha</taxon>
        <taxon>Rhabditoidea</taxon>
        <taxon>Rhabditidae</taxon>
        <taxon>Peloderinae</taxon>
        <taxon>Caenorhabditis</taxon>
    </lineage>
</organism>
<dbReference type="EMBL" id="BX284605">
    <property type="protein sequence ID" value="CAA21622.4"/>
    <property type="molecule type" value="Genomic_DNA"/>
</dbReference>
<dbReference type="RefSeq" id="NP_507812.3">
    <property type="nucleotide sequence ID" value="NM_075411.4"/>
</dbReference>
<dbReference type="SMR" id="Q9U2G5"/>
<dbReference type="FunCoup" id="Q9U2G5">
    <property type="interactions" value="149"/>
</dbReference>
<dbReference type="STRING" id="6239.Y43F8C.12.1"/>
<dbReference type="GlyCosmos" id="Q9U2G5">
    <property type="glycosylation" value="4 sites, No reported glycans"/>
</dbReference>
<dbReference type="PaxDb" id="6239-Y43F8C.12"/>
<dbReference type="PeptideAtlas" id="Q9U2G5"/>
<dbReference type="EnsemblMetazoa" id="Y43F8C.12.1">
    <property type="protein sequence ID" value="Y43F8C.12.1"/>
    <property type="gene ID" value="WBGene00003413"/>
</dbReference>
<dbReference type="GeneID" id="180289"/>
<dbReference type="KEGG" id="cel:CELE_Y43F8C.12"/>
<dbReference type="UCSC" id="Y43F8C.12">
    <property type="organism name" value="c. elegans"/>
</dbReference>
<dbReference type="AGR" id="WB:WBGene00003413"/>
<dbReference type="CTD" id="180289"/>
<dbReference type="WormBase" id="Y43F8C.12">
    <property type="protein sequence ID" value="CE43255"/>
    <property type="gene ID" value="WBGene00003413"/>
    <property type="gene designation" value="mrp-7"/>
</dbReference>
<dbReference type="eggNOG" id="KOG0054">
    <property type="taxonomic scope" value="Eukaryota"/>
</dbReference>
<dbReference type="GeneTree" id="ENSGT00940000166156"/>
<dbReference type="HOGENOM" id="CLU_000604_27_3_1"/>
<dbReference type="InParanoid" id="Q9U2G5"/>
<dbReference type="OMA" id="RLEIYMC"/>
<dbReference type="OrthoDB" id="6500128at2759"/>
<dbReference type="PhylomeDB" id="Q9U2G5"/>
<dbReference type="Reactome" id="R-CEL-159418">
    <property type="pathway name" value="Recycling of bile acids and salts"/>
</dbReference>
<dbReference type="Reactome" id="R-CEL-189483">
    <property type="pathway name" value="Heme degradation"/>
</dbReference>
<dbReference type="Reactome" id="R-CEL-382556">
    <property type="pathway name" value="ABC-family proteins mediated transport"/>
</dbReference>
<dbReference type="Reactome" id="R-CEL-9749641">
    <property type="pathway name" value="Aspirin ADME"/>
</dbReference>
<dbReference type="Reactome" id="R-CEL-9753281">
    <property type="pathway name" value="Paracetamol ADME"/>
</dbReference>
<dbReference type="Reactome" id="R-CEL-9754706">
    <property type="pathway name" value="Atorvastatin ADME"/>
</dbReference>
<dbReference type="PRO" id="PR:Q9U2G5"/>
<dbReference type="Proteomes" id="UP000001940">
    <property type="component" value="Chromosome V"/>
</dbReference>
<dbReference type="Bgee" id="WBGene00003413">
    <property type="expression patterns" value="Expressed in adult organism and 3 other cell types or tissues"/>
</dbReference>
<dbReference type="GO" id="GO:0016020">
    <property type="term" value="C:membrane"/>
    <property type="evidence" value="ECO:0000318"/>
    <property type="project" value="GO_Central"/>
</dbReference>
<dbReference type="GO" id="GO:0005886">
    <property type="term" value="C:plasma membrane"/>
    <property type="evidence" value="ECO:0007669"/>
    <property type="project" value="UniProtKB-SubCell"/>
</dbReference>
<dbReference type="GO" id="GO:0140359">
    <property type="term" value="F:ABC-type transporter activity"/>
    <property type="evidence" value="ECO:0007669"/>
    <property type="project" value="InterPro"/>
</dbReference>
<dbReference type="GO" id="GO:0005524">
    <property type="term" value="F:ATP binding"/>
    <property type="evidence" value="ECO:0007669"/>
    <property type="project" value="UniProtKB-KW"/>
</dbReference>
<dbReference type="GO" id="GO:0016887">
    <property type="term" value="F:ATP hydrolysis activity"/>
    <property type="evidence" value="ECO:0007669"/>
    <property type="project" value="InterPro"/>
</dbReference>
<dbReference type="GO" id="GO:0042626">
    <property type="term" value="F:ATPase-coupled transmembrane transporter activity"/>
    <property type="evidence" value="ECO:0000318"/>
    <property type="project" value="GO_Central"/>
</dbReference>
<dbReference type="GO" id="GO:0051597">
    <property type="term" value="P:response to methylmercury"/>
    <property type="evidence" value="ECO:0000315"/>
    <property type="project" value="WormBase"/>
</dbReference>
<dbReference type="GO" id="GO:0055085">
    <property type="term" value="P:transmembrane transport"/>
    <property type="evidence" value="ECO:0000318"/>
    <property type="project" value="GO_Central"/>
</dbReference>
<dbReference type="CDD" id="cd18595">
    <property type="entry name" value="ABC_6TM_MRP1_2_3_6_D1_like"/>
    <property type="match status" value="1"/>
</dbReference>
<dbReference type="CDD" id="cd18603">
    <property type="entry name" value="ABC_6TM_MRP1_2_3_6_D2_like"/>
    <property type="match status" value="1"/>
</dbReference>
<dbReference type="CDD" id="cd03250">
    <property type="entry name" value="ABCC_MRP_domain1"/>
    <property type="match status" value="1"/>
</dbReference>
<dbReference type="CDD" id="cd03244">
    <property type="entry name" value="ABCC_MRP_domain2"/>
    <property type="match status" value="1"/>
</dbReference>
<dbReference type="FunFam" id="1.20.1560.10:FF:000100">
    <property type="entry name" value="ABC transporter ATP-binding protein"/>
    <property type="match status" value="1"/>
</dbReference>
<dbReference type="FunFam" id="3.40.50.300:FF:000074">
    <property type="entry name" value="Multidrug resistance-associated protein 5 isoform 1"/>
    <property type="match status" value="1"/>
</dbReference>
<dbReference type="FunFam" id="1.20.1560.10:FF:000081">
    <property type="entry name" value="Protein CBG24505"/>
    <property type="match status" value="1"/>
</dbReference>
<dbReference type="FunFam" id="3.40.50.300:FF:001792">
    <property type="entry name" value="Putative abc transporter"/>
    <property type="match status" value="1"/>
</dbReference>
<dbReference type="Gene3D" id="1.20.1560.10">
    <property type="entry name" value="ABC transporter type 1, transmembrane domain"/>
    <property type="match status" value="2"/>
</dbReference>
<dbReference type="Gene3D" id="3.40.50.300">
    <property type="entry name" value="P-loop containing nucleotide triphosphate hydrolases"/>
    <property type="match status" value="2"/>
</dbReference>
<dbReference type="InterPro" id="IPR003593">
    <property type="entry name" value="AAA+_ATPase"/>
</dbReference>
<dbReference type="InterPro" id="IPR011527">
    <property type="entry name" value="ABC1_TM_dom"/>
</dbReference>
<dbReference type="InterPro" id="IPR036640">
    <property type="entry name" value="ABC1_TM_sf"/>
</dbReference>
<dbReference type="InterPro" id="IPR003439">
    <property type="entry name" value="ABC_transporter-like_ATP-bd"/>
</dbReference>
<dbReference type="InterPro" id="IPR017871">
    <property type="entry name" value="ABC_transporter-like_CS"/>
</dbReference>
<dbReference type="InterPro" id="IPR050173">
    <property type="entry name" value="ABC_transporter_C-like"/>
</dbReference>
<dbReference type="InterPro" id="IPR005292">
    <property type="entry name" value="MRP"/>
</dbReference>
<dbReference type="InterPro" id="IPR027417">
    <property type="entry name" value="P-loop_NTPase"/>
</dbReference>
<dbReference type="NCBIfam" id="TIGR00957">
    <property type="entry name" value="MRP_assoc_pro"/>
    <property type="match status" value="1"/>
</dbReference>
<dbReference type="PANTHER" id="PTHR24223">
    <property type="entry name" value="ATP-BINDING CASSETTE SUB-FAMILY C"/>
    <property type="match status" value="1"/>
</dbReference>
<dbReference type="PANTHER" id="PTHR24223:SF434">
    <property type="entry name" value="MULTIDRUG RESISTANCE PROTEIN MRP-7"/>
    <property type="match status" value="1"/>
</dbReference>
<dbReference type="Pfam" id="PF00664">
    <property type="entry name" value="ABC_membrane"/>
    <property type="match status" value="2"/>
</dbReference>
<dbReference type="Pfam" id="PF00005">
    <property type="entry name" value="ABC_tran"/>
    <property type="match status" value="2"/>
</dbReference>
<dbReference type="SMART" id="SM00382">
    <property type="entry name" value="AAA"/>
    <property type="match status" value="2"/>
</dbReference>
<dbReference type="SUPFAM" id="SSF90123">
    <property type="entry name" value="ABC transporter transmembrane region"/>
    <property type="match status" value="2"/>
</dbReference>
<dbReference type="SUPFAM" id="SSF52540">
    <property type="entry name" value="P-loop containing nucleoside triphosphate hydrolases"/>
    <property type="match status" value="2"/>
</dbReference>
<dbReference type="PROSITE" id="PS50929">
    <property type="entry name" value="ABC_TM1F"/>
    <property type="match status" value="2"/>
</dbReference>
<dbReference type="PROSITE" id="PS00211">
    <property type="entry name" value="ABC_TRANSPORTER_1"/>
    <property type="match status" value="2"/>
</dbReference>
<dbReference type="PROSITE" id="PS50893">
    <property type="entry name" value="ABC_TRANSPORTER_2"/>
    <property type="match status" value="2"/>
</dbReference>
<dbReference type="PROSITE" id="PS00041">
    <property type="entry name" value="HTH_ARAC_FAMILY_1"/>
    <property type="match status" value="1"/>
</dbReference>
<gene>
    <name evidence="10" type="primary">mrp-7</name>
    <name evidence="10" type="ORF">Y43F8C.12</name>
</gene>
<evidence type="ECO:0000255" key="1"/>
<evidence type="ECO:0000255" key="2">
    <source>
        <dbReference type="PROSITE-ProRule" id="PRU00434"/>
    </source>
</evidence>
<evidence type="ECO:0000255" key="3">
    <source>
        <dbReference type="PROSITE-ProRule" id="PRU00441"/>
    </source>
</evidence>
<evidence type="ECO:0000255" key="4">
    <source>
        <dbReference type="PROSITE-ProRule" id="PRU00498"/>
    </source>
</evidence>
<evidence type="ECO:0000256" key="5">
    <source>
        <dbReference type="SAM" id="MobiDB-lite"/>
    </source>
</evidence>
<evidence type="ECO:0000269" key="6">
    <source>
    </source>
</evidence>
<evidence type="ECO:0000303" key="7">
    <source>
    </source>
</evidence>
<evidence type="ECO:0000305" key="8"/>
<evidence type="ECO:0000312" key="9">
    <source>
        <dbReference type="Proteomes" id="UP000001940"/>
    </source>
</evidence>
<evidence type="ECO:0000312" key="10">
    <source>
        <dbReference type="WormBase" id="Y43F8C.12"/>
    </source>
</evidence>
<keyword id="KW-0067">ATP-binding</keyword>
<keyword id="KW-1003">Cell membrane</keyword>
<keyword id="KW-0325">Glycoprotein</keyword>
<keyword id="KW-0472">Membrane</keyword>
<keyword id="KW-0547">Nucleotide-binding</keyword>
<keyword id="KW-1185">Reference proteome</keyword>
<keyword id="KW-0677">Repeat</keyword>
<keyword id="KW-0812">Transmembrane</keyword>
<keyword id="KW-1133">Transmembrane helix</keyword>
<keyword id="KW-0813">Transport</keyword>
<proteinExistence type="evidence at transcript level"/>
<comment type="function">
    <text evidence="6">Negatively regulates cellular toxicity by mediating the export of environmental toxicants such as methylmercury out of the cell (PubMed:24266639). Plays a role in inhibiting methylmercury-induced dopamine (DA) motor neuron degeneration (PubMed:24266639). Not involved in Mn(2+)- or Al(3+)-associated toxicity (PubMed:24266639).</text>
</comment>
<comment type="subcellular location">
    <subcellularLocation>
        <location evidence="8">Cell membrane</location>
        <topology evidence="1">Multi-pass membrane protein</topology>
    </subcellularLocation>
</comment>
<comment type="tissue specificity">
    <text evidence="6">Expressed in head neurons, including the dopamine (DA) motor neuron, and other cells in the body.</text>
</comment>
<comment type="induction">
    <text evidence="6">Up-regulated in response to environmental toxicants such as methylmercury.</text>
</comment>
<comment type="disruption phenotype">
    <text evidence="6">RNAi-mediated knockdown results in increased death in response to the environmental toxicant methylmercury (PubMed:24266639). Furthermore, in response to methylmercury, RNAi-mediated knockdown results in the accumulation of the methylmercury in cells, the subsequent increase of gst-1, hsp-4, hsp-6, and hsp-16.1 gene expression, and in dopamine (DA) motor neuron degeneration (PubMed:24266639).</text>
</comment>
<comment type="similarity">
    <text evidence="8">Belongs to the ABC transporter superfamily. ABCC family. Conjugate transporter (TC 3.A.1.208) subfamily.</text>
</comment>
<reference evidence="9" key="1">
    <citation type="journal article" date="1998" name="Science">
        <title>Genome sequence of the nematode C. elegans: a platform for investigating biology.</title>
        <authorList>
            <consortium name="The C. elegans sequencing consortium"/>
        </authorList>
    </citation>
    <scope>NUCLEOTIDE SEQUENCE [LARGE SCALE GENOMIC DNA]</scope>
    <source>
        <strain evidence="9">Bristol N2</strain>
    </source>
</reference>
<reference evidence="8" key="2">
    <citation type="journal article" date="2014" name="J. Neurochem.">
        <title>The putative multidrug resistance protein MRP-7 inhibits methylmercury-associated animal toxicity and dopaminergic neurodegeneration in Caenorhabditis elegans.</title>
        <authorList>
            <person name="VanDuyn N."/>
            <person name="Nass R."/>
        </authorList>
    </citation>
    <scope>FUNCTION</scope>
    <scope>TISSUE SPECIFICITY</scope>
    <scope>INDUCTION BY METHYLMERCURY</scope>
    <scope>DISRUPTION PHENOTYPE</scope>
</reference>
<accession>Q9U2G5</accession>